<organism>
    <name type="scientific">Drosophila ananassae</name>
    <name type="common">Fruit fly</name>
    <dbReference type="NCBI Taxonomy" id="7217"/>
    <lineage>
        <taxon>Eukaryota</taxon>
        <taxon>Metazoa</taxon>
        <taxon>Ecdysozoa</taxon>
        <taxon>Arthropoda</taxon>
        <taxon>Hexapoda</taxon>
        <taxon>Insecta</taxon>
        <taxon>Pterygota</taxon>
        <taxon>Neoptera</taxon>
        <taxon>Endopterygota</taxon>
        <taxon>Diptera</taxon>
        <taxon>Brachycera</taxon>
        <taxon>Muscomorpha</taxon>
        <taxon>Ephydroidea</taxon>
        <taxon>Drosophilidae</taxon>
        <taxon>Drosophila</taxon>
        <taxon>Sophophora</taxon>
    </lineage>
</organism>
<accession>B3MH43</accession>
<dbReference type="EMBL" id="CH902619">
    <property type="protein sequence ID" value="EDV35802.1"/>
    <property type="molecule type" value="Genomic_DNA"/>
</dbReference>
<dbReference type="SMR" id="B3MH43"/>
<dbReference type="FunCoup" id="B3MH43">
    <property type="interactions" value="254"/>
</dbReference>
<dbReference type="STRING" id="7217.B3MH43"/>
<dbReference type="GlyCosmos" id="B3MH43">
    <property type="glycosylation" value="9 sites, No reported glycans"/>
</dbReference>
<dbReference type="EnsemblMetazoa" id="FBtr0117349">
    <property type="protein sequence ID" value="FBpp0115841"/>
    <property type="gene ID" value="FBgn0089685"/>
</dbReference>
<dbReference type="EnsemblMetazoa" id="XM_001958944.4">
    <property type="protein sequence ID" value="XP_001958980.1"/>
    <property type="gene ID" value="LOC6495498"/>
</dbReference>
<dbReference type="GeneID" id="6495498"/>
<dbReference type="KEGG" id="dan:6495498"/>
<dbReference type="CTD" id="36283"/>
<dbReference type="eggNOG" id="KOG1026">
    <property type="taxonomic scope" value="Eukaryota"/>
</dbReference>
<dbReference type="eggNOG" id="KOG4475">
    <property type="taxonomic scope" value="Eukaryota"/>
</dbReference>
<dbReference type="HOGENOM" id="CLU_012268_0_0_1"/>
<dbReference type="InParanoid" id="B3MH43"/>
<dbReference type="OMA" id="SHLHIEA"/>
<dbReference type="OrthoDB" id="2413561at2759"/>
<dbReference type="PhylomeDB" id="B3MH43"/>
<dbReference type="ChiTaRS" id="otk">
    <property type="organism name" value="fly"/>
</dbReference>
<dbReference type="Proteomes" id="UP000007801">
    <property type="component" value="Unassembled WGS sequence"/>
</dbReference>
<dbReference type="GO" id="GO:0030424">
    <property type="term" value="C:axon"/>
    <property type="evidence" value="ECO:0007669"/>
    <property type="project" value="EnsemblMetazoa"/>
</dbReference>
<dbReference type="GO" id="GO:0005886">
    <property type="term" value="C:plasma membrane"/>
    <property type="evidence" value="ECO:0000250"/>
    <property type="project" value="UniProtKB"/>
</dbReference>
<dbReference type="GO" id="GO:0043235">
    <property type="term" value="C:receptor complex"/>
    <property type="evidence" value="ECO:0007669"/>
    <property type="project" value="TreeGrafter"/>
</dbReference>
<dbReference type="GO" id="GO:0005524">
    <property type="term" value="F:ATP binding"/>
    <property type="evidence" value="ECO:0007669"/>
    <property type="project" value="InterPro"/>
</dbReference>
<dbReference type="GO" id="GO:0050839">
    <property type="term" value="F:cell adhesion molecule binding"/>
    <property type="evidence" value="ECO:0000250"/>
    <property type="project" value="UniProtKB"/>
</dbReference>
<dbReference type="GO" id="GO:0046982">
    <property type="term" value="F:protein heterodimerization activity"/>
    <property type="evidence" value="ECO:0007669"/>
    <property type="project" value="EnsemblMetazoa"/>
</dbReference>
<dbReference type="GO" id="GO:0042803">
    <property type="term" value="F:protein homodimerization activity"/>
    <property type="evidence" value="ECO:0007669"/>
    <property type="project" value="EnsemblMetazoa"/>
</dbReference>
<dbReference type="GO" id="GO:0004672">
    <property type="term" value="F:protein kinase activity"/>
    <property type="evidence" value="ECO:0000250"/>
    <property type="project" value="UniProtKB"/>
</dbReference>
<dbReference type="GO" id="GO:0038023">
    <property type="term" value="F:signaling receptor activity"/>
    <property type="evidence" value="ECO:0000250"/>
    <property type="project" value="UniProtKB"/>
</dbReference>
<dbReference type="GO" id="GO:0004714">
    <property type="term" value="F:transmembrane receptor protein tyrosine kinase activity"/>
    <property type="evidence" value="ECO:0007669"/>
    <property type="project" value="EnsemblMetazoa"/>
</dbReference>
<dbReference type="GO" id="GO:0017147">
    <property type="term" value="F:Wnt-protein binding"/>
    <property type="evidence" value="ECO:0007669"/>
    <property type="project" value="EnsemblMetazoa"/>
</dbReference>
<dbReference type="GO" id="GO:0007155">
    <property type="term" value="P:cell adhesion"/>
    <property type="evidence" value="ECO:0000250"/>
    <property type="project" value="UniProtKB"/>
</dbReference>
<dbReference type="GO" id="GO:0007169">
    <property type="term" value="P:cell surface receptor protein tyrosine kinase signaling pathway"/>
    <property type="evidence" value="ECO:0007669"/>
    <property type="project" value="TreeGrafter"/>
</dbReference>
<dbReference type="GO" id="GO:0048804">
    <property type="term" value="P:imaginal disc-derived female genitalia morphogenesis"/>
    <property type="evidence" value="ECO:0007669"/>
    <property type="project" value="EnsemblMetazoa"/>
</dbReference>
<dbReference type="GO" id="GO:0048803">
    <property type="term" value="P:imaginal disc-derived male genitalia morphogenesis"/>
    <property type="evidence" value="ECO:0007669"/>
    <property type="project" value="EnsemblMetazoa"/>
</dbReference>
<dbReference type="GO" id="GO:0035260">
    <property type="term" value="P:internal genitalia morphogenesis"/>
    <property type="evidence" value="ECO:0007669"/>
    <property type="project" value="EnsemblMetazoa"/>
</dbReference>
<dbReference type="GO" id="GO:0090090">
    <property type="term" value="P:negative regulation of canonical Wnt signaling pathway"/>
    <property type="evidence" value="ECO:0007669"/>
    <property type="project" value="EnsemblMetazoa"/>
</dbReference>
<dbReference type="GO" id="GO:0072499">
    <property type="term" value="P:photoreceptor cell axon guidance"/>
    <property type="evidence" value="ECO:0007669"/>
    <property type="project" value="EnsemblMetazoa"/>
</dbReference>
<dbReference type="GO" id="GO:0010976">
    <property type="term" value="P:positive regulation of neuron projection development"/>
    <property type="evidence" value="ECO:0007669"/>
    <property type="project" value="TreeGrafter"/>
</dbReference>
<dbReference type="GO" id="GO:0051897">
    <property type="term" value="P:positive regulation of phosphatidylinositol 3-kinase/protein kinase B signal transduction"/>
    <property type="evidence" value="ECO:0007669"/>
    <property type="project" value="TreeGrafter"/>
</dbReference>
<dbReference type="GO" id="GO:0031290">
    <property type="term" value="P:retinal ganglion cell axon guidance"/>
    <property type="evidence" value="ECO:0000250"/>
    <property type="project" value="UniProtKB"/>
</dbReference>
<dbReference type="CDD" id="cd00096">
    <property type="entry name" value="Ig"/>
    <property type="match status" value="2"/>
</dbReference>
<dbReference type="CDD" id="cd05046">
    <property type="entry name" value="PTK_CCK4"/>
    <property type="match status" value="1"/>
</dbReference>
<dbReference type="FunFam" id="1.10.510.10:FF:000954">
    <property type="entry name" value="Tyrosine-protein kinase-like otk"/>
    <property type="match status" value="1"/>
</dbReference>
<dbReference type="FunFam" id="2.60.40.10:FF:001805">
    <property type="entry name" value="Tyrosine-protein kinase-like otk"/>
    <property type="match status" value="1"/>
</dbReference>
<dbReference type="FunFam" id="2.60.40.10:FF:002027">
    <property type="entry name" value="Tyrosine-protein kinase-like otk"/>
    <property type="match status" value="1"/>
</dbReference>
<dbReference type="FunFam" id="2.60.40.10:FF:002086">
    <property type="entry name" value="Tyrosine-protein kinase-like otk"/>
    <property type="match status" value="1"/>
</dbReference>
<dbReference type="FunFam" id="2.60.40.10:FF:002809">
    <property type="entry name" value="Tyrosine-protein kinase-like otk"/>
    <property type="match status" value="1"/>
</dbReference>
<dbReference type="FunFam" id="3.30.200.20:FF:001776">
    <property type="entry name" value="Tyrosine-protein kinase-like otk"/>
    <property type="match status" value="1"/>
</dbReference>
<dbReference type="FunFam" id="2.60.40.10:FF:002127">
    <property type="entry name" value="tyrosine-protein kinase-like otk"/>
    <property type="match status" value="1"/>
</dbReference>
<dbReference type="Gene3D" id="2.60.40.10">
    <property type="entry name" value="Immunoglobulins"/>
    <property type="match status" value="5"/>
</dbReference>
<dbReference type="Gene3D" id="1.10.510.10">
    <property type="entry name" value="Transferase(Phosphotransferase) domain 1"/>
    <property type="match status" value="1"/>
</dbReference>
<dbReference type="InterPro" id="IPR007110">
    <property type="entry name" value="Ig-like_dom"/>
</dbReference>
<dbReference type="InterPro" id="IPR036179">
    <property type="entry name" value="Ig-like_dom_sf"/>
</dbReference>
<dbReference type="InterPro" id="IPR013783">
    <property type="entry name" value="Ig-like_fold"/>
</dbReference>
<dbReference type="InterPro" id="IPR013098">
    <property type="entry name" value="Ig_I-set"/>
</dbReference>
<dbReference type="InterPro" id="IPR003599">
    <property type="entry name" value="Ig_sub"/>
</dbReference>
<dbReference type="InterPro" id="IPR003598">
    <property type="entry name" value="Ig_sub2"/>
</dbReference>
<dbReference type="InterPro" id="IPR011009">
    <property type="entry name" value="Kinase-like_dom_sf"/>
</dbReference>
<dbReference type="InterPro" id="IPR000719">
    <property type="entry name" value="Prot_kinase_dom"/>
</dbReference>
<dbReference type="InterPro" id="IPR050122">
    <property type="entry name" value="RTK"/>
</dbReference>
<dbReference type="InterPro" id="IPR001245">
    <property type="entry name" value="Ser-Thr/Tyr_kinase_cat_dom"/>
</dbReference>
<dbReference type="InterPro" id="IPR008266">
    <property type="entry name" value="Tyr_kinase_AS"/>
</dbReference>
<dbReference type="InterPro" id="IPR020635">
    <property type="entry name" value="Tyr_kinase_cat_dom"/>
</dbReference>
<dbReference type="PANTHER" id="PTHR24416">
    <property type="entry name" value="TYROSINE-PROTEIN KINASE RECEPTOR"/>
    <property type="match status" value="1"/>
</dbReference>
<dbReference type="PANTHER" id="PTHR24416:SF349">
    <property type="entry name" value="TYROSINE-PROTEIN KINASE RYK"/>
    <property type="match status" value="1"/>
</dbReference>
<dbReference type="Pfam" id="PF07679">
    <property type="entry name" value="I-set"/>
    <property type="match status" value="2"/>
</dbReference>
<dbReference type="Pfam" id="PF13927">
    <property type="entry name" value="Ig_3"/>
    <property type="match status" value="2"/>
</dbReference>
<dbReference type="Pfam" id="PF07714">
    <property type="entry name" value="PK_Tyr_Ser-Thr"/>
    <property type="match status" value="1"/>
</dbReference>
<dbReference type="PIRSF" id="PIRSF000615">
    <property type="entry name" value="TyrPK_CSF1-R"/>
    <property type="match status" value="1"/>
</dbReference>
<dbReference type="PRINTS" id="PR00109">
    <property type="entry name" value="TYRKINASE"/>
</dbReference>
<dbReference type="SMART" id="SM00409">
    <property type="entry name" value="IG"/>
    <property type="match status" value="5"/>
</dbReference>
<dbReference type="SMART" id="SM00408">
    <property type="entry name" value="IGc2"/>
    <property type="match status" value="5"/>
</dbReference>
<dbReference type="SMART" id="SM00219">
    <property type="entry name" value="TyrKc"/>
    <property type="match status" value="1"/>
</dbReference>
<dbReference type="SUPFAM" id="SSF48726">
    <property type="entry name" value="Immunoglobulin"/>
    <property type="match status" value="4"/>
</dbReference>
<dbReference type="SUPFAM" id="SSF56112">
    <property type="entry name" value="Protein kinase-like (PK-like)"/>
    <property type="match status" value="1"/>
</dbReference>
<dbReference type="PROSITE" id="PS50835">
    <property type="entry name" value="IG_LIKE"/>
    <property type="match status" value="5"/>
</dbReference>
<dbReference type="PROSITE" id="PS50011">
    <property type="entry name" value="PROTEIN_KINASE_DOM"/>
    <property type="match status" value="1"/>
</dbReference>
<dbReference type="PROSITE" id="PS00109">
    <property type="entry name" value="PROTEIN_KINASE_TYR"/>
    <property type="match status" value="1"/>
</dbReference>
<gene>
    <name evidence="2" type="primary">otk</name>
    <name type="ORF">GF12649</name>
</gene>
<comment type="function">
    <text evidence="1">Acts as a calcium-dependent, homophilic cell adhesion molecule that regulates neural recognition during the development of the nervous system. Component of the repulsive Plexin signaling response to regulate motor axon guidance at the embryonic stage. Also component of a receptor complex that is required in the adult visual system to innervate the lamina layer; specific targeting of R1-R6 axons (By similarity).</text>
</comment>
<comment type="subunit">
    <text evidence="1">Interacts with plexA; component of a receptor complex that mediates the repulsive signaling in response to Semaphorin ligands.</text>
</comment>
<comment type="subcellular location">
    <subcellularLocation>
        <location evidence="2">Cell membrane</location>
        <topology evidence="2">Single-pass type I membrane protein</topology>
    </subcellularLocation>
</comment>
<comment type="similarity">
    <text evidence="5">Belongs to the protein kinase superfamily. Tyr protein kinase family. Insulin receptor subfamily.</text>
</comment>
<comment type="caution">
    <text evidence="7">The D.melanogaster ortholog of this protein has been proposed to undergo autophosphorylation on tyrosine residues which is induced in response to cell adhesion (PubMed:1371458). However as mammalian orthologs of this protein seem to lack kinase activity this protein may associate with, and be phosphorylated by, an unknown active tyrosine kinase.</text>
</comment>
<evidence type="ECO:0000250" key="1"/>
<evidence type="ECO:0000250" key="2">
    <source>
        <dbReference type="UniProtKB" id="Q6AWJ9"/>
    </source>
</evidence>
<evidence type="ECO:0000255" key="3"/>
<evidence type="ECO:0000255" key="4">
    <source>
        <dbReference type="PROSITE-ProRule" id="PRU00114"/>
    </source>
</evidence>
<evidence type="ECO:0000255" key="5">
    <source>
        <dbReference type="PROSITE-ProRule" id="PRU00159"/>
    </source>
</evidence>
<evidence type="ECO:0000256" key="6">
    <source>
        <dbReference type="SAM" id="MobiDB-lite"/>
    </source>
</evidence>
<evidence type="ECO:0000305" key="7"/>
<evidence type="ECO:0000312" key="8">
    <source>
        <dbReference type="EMBL" id="EDV35802.1"/>
    </source>
</evidence>
<proteinExistence type="inferred from homology"/>
<sequence>MAALRISVWILVQALMMALVSSNSSHFLQLPQSQSVVENESVDFECQASTDPSSELHYEWLHNGHRIAYDKRVYQIGSHLHIEAVQRAEDVGDYVCIATSLASGAREASPPAKLSVIYIDSASVQLLGSNRNELLLKCHVEAVSGSDDPLQIEWYRNSAKLSSWQNVQLDQHRLIIRQPSAADDGLYRCTASNAAGRVMSKQGYVYRSSLKCLPRLPRRKNQKLPESWSKEVFLCRGKRGGSGGVEALPSAPEDLRIVQGPASHAIIKEGDPAALTCLYELPAELQNQRIQLRWRKDGKLLRHVELGNSLPLPGISSDSGKDALLREDARLVLHKQNGTLSFASIIASDAGQYQCQLQLEGYAPINSSPGTLEVIEQLKFVPQPTSKNLELDAPIAKVHCKAQGTPTPQVQWMRDDANTSLPDQVEVDANGTLIFRNVNADHRGNYTCLATNSQGQINATVAINVVVTPKFSVPPVGPIETAEQGNVVIHCQAIGDPKPTIQWDKDLTYLSENNTDRERFRFLENGTLEIRNVQAEDEGSYGCTIGNSAGLKREDVQLVVKTAGDGFPPEESGGDGFLVTRAVLITMTVALAYIVLVVGLMLWCRYRRQARKARLNELSTKEAGGDQPDGAANGKGSEQEPCLSKQRNGHGGQSRSKSNGDAQKSDDTACSQQSRASKKSAHIYEQLALPRSGLTELIQIGRGEFGDVFVGKLKASLVATGSPSDKDADTEKQHSNSENGSGGSGSGSTTLSTLNEKRRSKTSMDDIEEIKEEEQEQQQSDLDQLVLVKALNKVKDEQACQEFRRQLDLLRGISHKGVVRLFGLCREKDPHYMVLEYTDWGDLKQFLLATAGKVNTASAAATSSPPPLTTSQVLAVAYQIARGMDAIYRARFTHRDLATRNCVISSEFIVKVSYPALCKDKYSREYHKHRNTLLPIRWLAPECIQEDEYTTKSDIFAYGVVVWELFNQATKLPHEELTNEQVIQKSQAGTLEWTVAESTPDSLREILLSCWVSNPKERPSFSQLGAALSKAMQSLEK</sequence>
<reference evidence="8" key="1">
    <citation type="journal article" date="2007" name="Nature">
        <title>Evolution of genes and genomes on the Drosophila phylogeny.</title>
        <authorList>
            <consortium name="Drosophila 12 genomes consortium"/>
        </authorList>
    </citation>
    <scope>NUCLEOTIDE SEQUENCE [LARGE SCALE GENOMIC DNA]</scope>
    <source>
        <strain evidence="8">Tucson 14024-0371.13</strain>
    </source>
</reference>
<feature type="signal peptide" evidence="3">
    <location>
        <begin position="1"/>
        <end position="22"/>
    </location>
</feature>
<feature type="chain" id="PRO_0000388686" description="Tyrosine-protein kinase-like otk" evidence="3">
    <location>
        <begin position="23"/>
        <end position="1037"/>
    </location>
</feature>
<feature type="topological domain" description="Extracellular" evidence="3">
    <location>
        <begin position="23"/>
        <end position="582"/>
    </location>
</feature>
<feature type="transmembrane region" description="Helical" evidence="3">
    <location>
        <begin position="583"/>
        <end position="603"/>
    </location>
</feature>
<feature type="topological domain" description="Cytoplasmic" evidence="3">
    <location>
        <begin position="604"/>
        <end position="1037"/>
    </location>
</feature>
<feature type="domain" description="Ig-like C2-type 1" evidence="3">
    <location>
        <begin position="25"/>
        <end position="115"/>
    </location>
</feature>
<feature type="domain" description="Ig-like C2-type 2" evidence="3">
    <location>
        <begin position="114"/>
        <end position="200"/>
    </location>
</feature>
<feature type="domain" description="Ig-like C2-type 3" evidence="3">
    <location>
        <begin position="252"/>
        <end position="366"/>
    </location>
</feature>
<feature type="domain" description="Ig-like C2-type 4" evidence="3">
    <location>
        <begin position="369"/>
        <end position="464"/>
    </location>
</feature>
<feature type="domain" description="Ig-like C2-type 5" evidence="3">
    <location>
        <begin position="469"/>
        <end position="559"/>
    </location>
</feature>
<feature type="domain" description="Protein kinase; inactive" evidence="5 7">
    <location>
        <begin position="694"/>
        <end position="1035"/>
    </location>
</feature>
<feature type="region of interest" description="Disordered" evidence="6">
    <location>
        <begin position="618"/>
        <end position="681"/>
    </location>
</feature>
<feature type="region of interest" description="Disordered" evidence="6">
    <location>
        <begin position="719"/>
        <end position="764"/>
    </location>
</feature>
<feature type="compositionally biased region" description="Polar residues" evidence="6">
    <location>
        <begin position="653"/>
        <end position="675"/>
    </location>
</feature>
<feature type="compositionally biased region" description="Basic and acidic residues" evidence="6">
    <location>
        <begin position="724"/>
        <end position="735"/>
    </location>
</feature>
<feature type="modified residue" description="Phosphoserine" evidence="2">
    <location>
        <position position="680"/>
    </location>
</feature>
<feature type="glycosylation site" description="N-linked (GlcNAc...) asparagine" evidence="3">
    <location>
        <position position="23"/>
    </location>
</feature>
<feature type="glycosylation site" description="N-linked (GlcNAc...) asparagine" evidence="3">
    <location>
        <position position="39"/>
    </location>
</feature>
<feature type="glycosylation site" description="N-linked (GlcNAc...) asparagine" evidence="3">
    <location>
        <position position="337"/>
    </location>
</feature>
<feature type="glycosylation site" description="N-linked (GlcNAc...) asparagine" evidence="3">
    <location>
        <position position="418"/>
    </location>
</feature>
<feature type="glycosylation site" description="N-linked (GlcNAc...) asparagine" evidence="3">
    <location>
        <position position="430"/>
    </location>
</feature>
<feature type="glycosylation site" description="N-linked (GlcNAc...) asparagine" evidence="3">
    <location>
        <position position="445"/>
    </location>
</feature>
<feature type="glycosylation site" description="N-linked (GlcNAc...) asparagine" evidence="3">
    <location>
        <position position="458"/>
    </location>
</feature>
<feature type="glycosylation site" description="N-linked (GlcNAc...) asparagine" evidence="3">
    <location>
        <position position="513"/>
    </location>
</feature>
<feature type="glycosylation site" description="N-linked (GlcNAc...) asparagine" evidence="3">
    <location>
        <position position="525"/>
    </location>
</feature>
<feature type="disulfide bond" evidence="4">
    <location>
        <begin position="46"/>
        <end position="96"/>
    </location>
</feature>
<feature type="disulfide bond" evidence="4">
    <location>
        <begin position="138"/>
        <end position="189"/>
    </location>
</feature>
<feature type="disulfide bond" evidence="4">
    <location>
        <begin position="277"/>
        <end position="355"/>
    </location>
</feature>
<feature type="disulfide bond" evidence="4">
    <location>
        <begin position="400"/>
        <end position="448"/>
    </location>
</feature>
<feature type="disulfide bond" evidence="4">
    <location>
        <begin position="491"/>
        <end position="543"/>
    </location>
</feature>
<protein>
    <recommendedName>
        <fullName evidence="2">Tyrosine-protein kinase-like otk</fullName>
    </recommendedName>
    <alternativeName>
        <fullName>Tyrosine-protein kinase-like 7 homolog</fullName>
    </alternativeName>
</protein>
<keyword id="KW-0130">Cell adhesion</keyword>
<keyword id="KW-1003">Cell membrane</keyword>
<keyword id="KW-1015">Disulfide bond</keyword>
<keyword id="KW-0325">Glycoprotein</keyword>
<keyword id="KW-0393">Immunoglobulin domain</keyword>
<keyword id="KW-0472">Membrane</keyword>
<keyword id="KW-0524">Neurogenesis</keyword>
<keyword id="KW-0597">Phosphoprotein</keyword>
<keyword id="KW-0675">Receptor</keyword>
<keyword id="KW-1185">Reference proteome</keyword>
<keyword id="KW-0677">Repeat</keyword>
<keyword id="KW-0732">Signal</keyword>
<keyword id="KW-0812">Transmembrane</keyword>
<keyword id="KW-1133">Transmembrane helix</keyword>
<name>PTK7_DROAN</name>